<reference key="1">
    <citation type="journal article" date="1991" name="Gene">
        <title>Sequence analysis of the 4.7-kb BamHI-EcoRI fragment of the equine herpesvirus type-1 short unique region.</title>
        <authorList>
            <person name="Elton D.M."/>
            <person name="Halliburton I.W."/>
            <person name="Killington R.A."/>
            <person name="Meredith D.M."/>
            <person name="Bonass W.A."/>
        </authorList>
    </citation>
    <scope>NUCLEOTIDE SEQUENCE [GENOMIC DNA]</scope>
</reference>
<keyword id="KW-0325">Glycoprotein</keyword>
<keyword id="KW-1031">Host cell junction</keyword>
<keyword id="KW-1032">Host cell membrane</keyword>
<keyword id="KW-1040">Host Golgi apparatus</keyword>
<keyword id="KW-1043">Host membrane</keyword>
<keyword id="KW-0472">Membrane</keyword>
<keyword id="KW-0597">Phosphoprotein</keyword>
<keyword id="KW-0732">Signal</keyword>
<keyword id="KW-0812">Transmembrane</keyword>
<keyword id="KW-1133">Transmembrane helix</keyword>
<keyword id="KW-0261">Viral envelope protein</keyword>
<keyword id="KW-0946">Virion</keyword>
<name>GI_EHV1A</name>
<organism>
    <name type="scientific">Equine herpesvirus 1 (strain AB1)</name>
    <name type="common">EHV-1</name>
    <name type="synonym">Equine abortion virus</name>
    <dbReference type="NCBI Taxonomy" id="10328"/>
    <lineage>
        <taxon>Viruses</taxon>
        <taxon>Duplodnaviria</taxon>
        <taxon>Heunggongvirae</taxon>
        <taxon>Peploviricota</taxon>
        <taxon>Herviviricetes</taxon>
        <taxon>Herpesvirales</taxon>
        <taxon>Orthoherpesviridae</taxon>
        <taxon>Alphaherpesvirinae</taxon>
        <taxon>Varicellovirus</taxon>
        <taxon>Varicellovirus equidalpha1</taxon>
        <taxon>Equid alphaherpesvirus 1</taxon>
    </lineage>
</organism>
<organismHost>
    <name type="scientific">Equus caballus</name>
    <name type="common">Horse</name>
    <dbReference type="NCBI Taxonomy" id="9796"/>
</organismHost>
<sequence>MAKLTGMFSAAILLSMAICSTAIIYRGEHMSMYLNASSEFAVYPTDQSLVLVGHLLFLDGQRLPTTNYSGLIELIHYNYSSVCYTVIQTISYESCPRVANNAFRSCLHKTSKHYHDYFRVNASVETNVLLNITKPQPTDSGAYILRVKLDHAPTADVFGVSAFVYDLKSKTVPDPMPTTQTVEPTTSYVSTPTYDYTDDVTTETESTSTSTQQAMTSTQTPSATWGTQLTTELPTNETVVIGQEALLCHWFQPSTRVPTLYLHLLGRTGNLPEDVLLVEDSEFLRTTSPAHRPSASPADGDDFKQTNSTSLKARNKIVAMVVIPTACVLMLLLVVVGAIINGAVRKHLLSCASRRIYRSGQGGASAAERRRLTCGPTLAASSESLADDTTSSPPTPKPSKKTKLETDPLMEQLNRKLEAIKEES</sequence>
<accession>P68326</accession>
<accession>P18553</accession>
<proteinExistence type="inferred from homology"/>
<protein>
    <recommendedName>
        <fullName>Envelope glycoprotein I</fullName>
    </recommendedName>
</protein>
<evidence type="ECO:0000250" key="1"/>
<evidence type="ECO:0000255" key="2"/>
<evidence type="ECO:0000256" key="3">
    <source>
        <dbReference type="SAM" id="MobiDB-lite"/>
    </source>
</evidence>
<evidence type="ECO:0000305" key="4"/>
<dbReference type="EMBL" id="M36299">
    <property type="protein sequence ID" value="AAA66547.1"/>
    <property type="molecule type" value="Genomic_DNA"/>
</dbReference>
<dbReference type="GlyCosmos" id="P68326">
    <property type="glycosylation" value="7 sites, No reported glycans"/>
</dbReference>
<dbReference type="KEGG" id="vg:2948579"/>
<dbReference type="GO" id="GO:0043657">
    <property type="term" value="C:host cell"/>
    <property type="evidence" value="ECO:0007669"/>
    <property type="project" value="InterPro"/>
</dbReference>
<dbReference type="GO" id="GO:0044178">
    <property type="term" value="C:host cell Golgi membrane"/>
    <property type="evidence" value="ECO:0007669"/>
    <property type="project" value="UniProtKB-SubCell"/>
</dbReference>
<dbReference type="GO" id="GO:0044156">
    <property type="term" value="C:host cell junction"/>
    <property type="evidence" value="ECO:0007669"/>
    <property type="project" value="UniProtKB-SubCell"/>
</dbReference>
<dbReference type="GO" id="GO:0016020">
    <property type="term" value="C:membrane"/>
    <property type="evidence" value="ECO:0007669"/>
    <property type="project" value="UniProtKB-KW"/>
</dbReference>
<dbReference type="GO" id="GO:0019031">
    <property type="term" value="C:viral envelope"/>
    <property type="evidence" value="ECO:0007669"/>
    <property type="project" value="UniProtKB-KW"/>
</dbReference>
<dbReference type="GO" id="GO:0055036">
    <property type="term" value="C:virion membrane"/>
    <property type="evidence" value="ECO:0007669"/>
    <property type="project" value="UniProtKB-SubCell"/>
</dbReference>
<dbReference type="Gene3D" id="2.70.230.10">
    <property type="match status" value="1"/>
</dbReference>
<dbReference type="InterPro" id="IPR002874">
    <property type="entry name" value="Herpes_gI"/>
</dbReference>
<dbReference type="Pfam" id="PF01688">
    <property type="entry name" value="Herpes_gI"/>
    <property type="match status" value="1"/>
</dbReference>
<comment type="function">
    <text>In epithelial cells, the heterodimer gE/gI is required for the cell-to-cell spread of the virus, by sorting nascent virions to cell junctions. Once the virus reaches the cell junctions, virus particles can spread to adjacent cells extremely rapidly through interactions with cellular receptors that accumulate at these junctions. Implicated in basolateral spread in polarized cells. In neuronal cells, gE/gI is essential for the anterograde spread of the infection throughout the host nervous system. Together with US9, the heterodimer gE/gI is involved in the sorting and transport of viral structural components toward axon tips.</text>
</comment>
<comment type="subunit">
    <text evidence="1">Interacts with gE.</text>
</comment>
<comment type="subcellular location">
    <subcellularLocation>
        <location evidence="1">Virion membrane</location>
        <topology evidence="1">Single-pass membrane protein</topology>
    </subcellularLocation>
    <subcellularLocation>
        <location evidence="4">Host cell membrane</location>
        <topology evidence="4">Single-pass type I membrane protein</topology>
    </subcellularLocation>
    <subcellularLocation>
        <location evidence="1">Host cell junction</location>
    </subcellularLocation>
    <subcellularLocation>
        <location evidence="1">Host Golgi apparatus membrane</location>
        <topology evidence="1">Single-pass type I membrane protein</topology>
    </subcellularLocation>
    <text evidence="1">During virion morphogenesis, this protein probably accumulates in the endosomes and trans-Golgi where secondary envelopment occurs. It is probably transported to the cell surface from where it is endocytosed and directed to the trans-Golgi network (TGN). The heterodimer gE/gI then redistribute to cell junctions to promote cell-cell spread later in the infection (By similarity).</text>
</comment>
<comment type="similarity">
    <text evidence="4">Belongs to the alphaherpesvirinae glycoprotein I family.</text>
</comment>
<feature type="signal peptide" evidence="2">
    <location>
        <begin position="1"/>
        <end position="22"/>
    </location>
</feature>
<feature type="chain" id="PRO_0000038258" description="Envelope glycoprotein I">
    <location>
        <begin position="23"/>
        <end position="424"/>
    </location>
</feature>
<feature type="topological domain" description="Virion surface" evidence="2">
    <location>
        <begin position="23"/>
        <end position="319"/>
    </location>
</feature>
<feature type="transmembrane region" description="Helical" evidence="2">
    <location>
        <begin position="320"/>
        <end position="340"/>
    </location>
</feature>
<feature type="topological domain" description="Intravirion" evidence="2">
    <location>
        <begin position="341"/>
        <end position="424"/>
    </location>
</feature>
<feature type="region of interest" description="Disordered" evidence="3">
    <location>
        <begin position="192"/>
        <end position="223"/>
    </location>
</feature>
<feature type="region of interest" description="Disordered" evidence="3">
    <location>
        <begin position="287"/>
        <end position="306"/>
    </location>
</feature>
<feature type="region of interest" description="Disordered" evidence="3">
    <location>
        <begin position="377"/>
        <end position="408"/>
    </location>
</feature>
<feature type="compositionally biased region" description="Low complexity" evidence="3">
    <location>
        <begin position="203"/>
        <end position="223"/>
    </location>
</feature>
<feature type="compositionally biased region" description="Polar residues" evidence="3">
    <location>
        <begin position="379"/>
        <end position="388"/>
    </location>
</feature>
<feature type="glycosylation site" description="N-linked (GlcNAc...) asparagine; by host" evidence="2">
    <location>
        <position position="35"/>
    </location>
</feature>
<feature type="glycosylation site" description="N-linked (GlcNAc...) asparagine; by host" evidence="2">
    <location>
        <position position="67"/>
    </location>
</feature>
<feature type="glycosylation site" description="N-linked (GlcNAc...) asparagine; by host" evidence="2">
    <location>
        <position position="78"/>
    </location>
</feature>
<feature type="glycosylation site" description="N-linked (GlcNAc...) asparagine; by host" evidence="2">
    <location>
        <position position="121"/>
    </location>
</feature>
<feature type="glycosylation site" description="N-linked (GlcNAc...) asparagine; by host" evidence="2">
    <location>
        <position position="131"/>
    </location>
</feature>
<feature type="glycosylation site" description="N-linked (GlcNAc...) asparagine; by host" evidence="2">
    <location>
        <position position="236"/>
    </location>
</feature>
<feature type="glycosylation site" description="N-linked (GlcNAc...) asparagine; by host" evidence="2">
    <location>
        <position position="307"/>
    </location>
</feature>
<gene>
    <name type="primary">gI</name>
</gene>